<reference key="1">
    <citation type="journal article" date="1994" name="Nucleic Acids Res.">
        <title>Cloning of cDNAs from Arabidopsis thaliana that encode putative protein phosphatase 2C and a human Dr1-like protein by transformation of a fission yeast mutant.</title>
        <authorList>
            <person name="Kuromori T."/>
            <person name="Yamamoto M."/>
        </authorList>
    </citation>
    <scope>NUCLEOTIDE SEQUENCE [MRNA]</scope>
    <source>
        <strain>cv. Columbia</strain>
    </source>
</reference>
<reference key="2">
    <citation type="journal article" date="2000" name="Nature">
        <title>Sequence and analysis of chromosome 3 of the plant Arabidopsis thaliana.</title>
        <authorList>
            <person name="Salanoubat M."/>
            <person name="Lemcke K."/>
            <person name="Rieger M."/>
            <person name="Ansorge W."/>
            <person name="Unseld M."/>
            <person name="Fartmann B."/>
            <person name="Valle G."/>
            <person name="Bloecker H."/>
            <person name="Perez-Alonso M."/>
            <person name="Obermaier B."/>
            <person name="Delseny M."/>
            <person name="Boutry M."/>
            <person name="Grivell L.A."/>
            <person name="Mache R."/>
            <person name="Puigdomenech P."/>
            <person name="De Simone V."/>
            <person name="Choisne N."/>
            <person name="Artiguenave F."/>
            <person name="Robert C."/>
            <person name="Brottier P."/>
            <person name="Wincker P."/>
            <person name="Cattolico L."/>
            <person name="Weissenbach J."/>
            <person name="Saurin W."/>
            <person name="Quetier F."/>
            <person name="Schaefer M."/>
            <person name="Mueller-Auer S."/>
            <person name="Gabel C."/>
            <person name="Fuchs M."/>
            <person name="Benes V."/>
            <person name="Wurmbach E."/>
            <person name="Drzonek H."/>
            <person name="Erfle H."/>
            <person name="Jordan N."/>
            <person name="Bangert S."/>
            <person name="Wiedelmann R."/>
            <person name="Kranz H."/>
            <person name="Voss H."/>
            <person name="Holland R."/>
            <person name="Brandt P."/>
            <person name="Nyakatura G."/>
            <person name="Vezzi A."/>
            <person name="D'Angelo M."/>
            <person name="Pallavicini A."/>
            <person name="Toppo S."/>
            <person name="Simionati B."/>
            <person name="Conrad A."/>
            <person name="Hornischer K."/>
            <person name="Kauer G."/>
            <person name="Loehnert T.-H."/>
            <person name="Nordsiek G."/>
            <person name="Reichelt J."/>
            <person name="Scharfe M."/>
            <person name="Schoen O."/>
            <person name="Bargues M."/>
            <person name="Terol J."/>
            <person name="Climent J."/>
            <person name="Navarro P."/>
            <person name="Collado C."/>
            <person name="Perez-Perez A."/>
            <person name="Ottenwaelder B."/>
            <person name="Duchemin D."/>
            <person name="Cooke R."/>
            <person name="Laudie M."/>
            <person name="Berger-Llauro C."/>
            <person name="Purnelle B."/>
            <person name="Masuy D."/>
            <person name="de Haan M."/>
            <person name="Maarse A.C."/>
            <person name="Alcaraz J.-P."/>
            <person name="Cottet A."/>
            <person name="Casacuberta E."/>
            <person name="Monfort A."/>
            <person name="Argiriou A."/>
            <person name="Flores M."/>
            <person name="Liguori R."/>
            <person name="Vitale D."/>
            <person name="Mannhaupt G."/>
            <person name="Haase D."/>
            <person name="Schoof H."/>
            <person name="Rudd S."/>
            <person name="Zaccaria P."/>
            <person name="Mewes H.-W."/>
            <person name="Mayer K.F.X."/>
            <person name="Kaul S."/>
            <person name="Town C.D."/>
            <person name="Koo H.L."/>
            <person name="Tallon L.J."/>
            <person name="Jenkins J."/>
            <person name="Rooney T."/>
            <person name="Rizzo M."/>
            <person name="Walts A."/>
            <person name="Utterback T."/>
            <person name="Fujii C.Y."/>
            <person name="Shea T.P."/>
            <person name="Creasy T.H."/>
            <person name="Haas B."/>
            <person name="Maiti R."/>
            <person name="Wu D."/>
            <person name="Peterson J."/>
            <person name="Van Aken S."/>
            <person name="Pai G."/>
            <person name="Militscher J."/>
            <person name="Sellers P."/>
            <person name="Gill J.E."/>
            <person name="Feldblyum T.V."/>
            <person name="Preuss D."/>
            <person name="Lin X."/>
            <person name="Nierman W.C."/>
            <person name="Salzberg S.L."/>
            <person name="White O."/>
            <person name="Venter J.C."/>
            <person name="Fraser C.M."/>
            <person name="Kaneko T."/>
            <person name="Nakamura Y."/>
            <person name="Sato S."/>
            <person name="Kato T."/>
            <person name="Asamizu E."/>
            <person name="Sasamoto S."/>
            <person name="Kimura T."/>
            <person name="Idesawa K."/>
            <person name="Kawashima K."/>
            <person name="Kishida Y."/>
            <person name="Kiyokawa C."/>
            <person name="Kohara M."/>
            <person name="Matsumoto M."/>
            <person name="Matsuno A."/>
            <person name="Muraki A."/>
            <person name="Nakayama S."/>
            <person name="Nakazaki N."/>
            <person name="Shinpo S."/>
            <person name="Takeuchi C."/>
            <person name="Wada T."/>
            <person name="Watanabe A."/>
            <person name="Yamada M."/>
            <person name="Yasuda M."/>
            <person name="Tabata S."/>
        </authorList>
    </citation>
    <scope>NUCLEOTIDE SEQUENCE [LARGE SCALE GENOMIC DNA]</scope>
    <source>
        <strain>cv. Columbia</strain>
    </source>
</reference>
<reference key="3">
    <citation type="journal article" date="2017" name="Plant J.">
        <title>Araport11: a complete reannotation of the Arabidopsis thaliana reference genome.</title>
        <authorList>
            <person name="Cheng C.Y."/>
            <person name="Krishnakumar V."/>
            <person name="Chan A.P."/>
            <person name="Thibaud-Nissen F."/>
            <person name="Schobel S."/>
            <person name="Town C.D."/>
        </authorList>
    </citation>
    <scope>GENOME REANNOTATION</scope>
    <source>
        <strain>cv. Columbia</strain>
    </source>
</reference>
<reference key="4">
    <citation type="journal article" date="2003" name="Science">
        <title>Empirical analysis of transcriptional activity in the Arabidopsis genome.</title>
        <authorList>
            <person name="Yamada K."/>
            <person name="Lim J."/>
            <person name="Dale J.M."/>
            <person name="Chen H."/>
            <person name="Shinn P."/>
            <person name="Palm C.J."/>
            <person name="Southwick A.M."/>
            <person name="Wu H.C."/>
            <person name="Kim C.J."/>
            <person name="Nguyen M."/>
            <person name="Pham P.K."/>
            <person name="Cheuk R.F."/>
            <person name="Karlin-Newmann G."/>
            <person name="Liu S.X."/>
            <person name="Lam B."/>
            <person name="Sakano H."/>
            <person name="Wu T."/>
            <person name="Yu G."/>
            <person name="Miranda M."/>
            <person name="Quach H.L."/>
            <person name="Tripp M."/>
            <person name="Chang C.H."/>
            <person name="Lee J.M."/>
            <person name="Toriumi M.J."/>
            <person name="Chan M.M."/>
            <person name="Tang C.C."/>
            <person name="Onodera C.S."/>
            <person name="Deng J.M."/>
            <person name="Akiyama K."/>
            <person name="Ansari Y."/>
            <person name="Arakawa T."/>
            <person name="Banh J."/>
            <person name="Banno F."/>
            <person name="Bowser L."/>
            <person name="Brooks S.Y."/>
            <person name="Carninci P."/>
            <person name="Chao Q."/>
            <person name="Choy N."/>
            <person name="Enju A."/>
            <person name="Goldsmith A.D."/>
            <person name="Gurjal M."/>
            <person name="Hansen N.F."/>
            <person name="Hayashizaki Y."/>
            <person name="Johnson-Hopson C."/>
            <person name="Hsuan V.W."/>
            <person name="Iida K."/>
            <person name="Karnes M."/>
            <person name="Khan S."/>
            <person name="Koesema E."/>
            <person name="Ishida J."/>
            <person name="Jiang P.X."/>
            <person name="Jones T."/>
            <person name="Kawai J."/>
            <person name="Kamiya A."/>
            <person name="Meyers C."/>
            <person name="Nakajima M."/>
            <person name="Narusaka M."/>
            <person name="Seki M."/>
            <person name="Sakurai T."/>
            <person name="Satou M."/>
            <person name="Tamse R."/>
            <person name="Vaysberg M."/>
            <person name="Wallender E.K."/>
            <person name="Wong C."/>
            <person name="Yamamura Y."/>
            <person name="Yuan S."/>
            <person name="Shinozaki K."/>
            <person name="Davis R.W."/>
            <person name="Theologis A."/>
            <person name="Ecker J.R."/>
        </authorList>
    </citation>
    <scope>NUCLEOTIDE SEQUENCE [LARGE SCALE MRNA]</scope>
    <source>
        <strain>cv. Columbia</strain>
    </source>
</reference>
<reference key="5">
    <citation type="journal article" date="1998" name="Proc. Natl. Acad. Sci. U.S.A.">
        <title>Mutational analysis of protein phosphatase 2C involved in abscisic acid signal transduction in higher plants.</title>
        <authorList>
            <person name="Sheen J."/>
        </authorList>
    </citation>
    <scope>FUNCTION</scope>
    <scope>MUTAGENESIS OF GLY-139 AND GLY-145</scope>
</reference>
<reference key="6">
    <citation type="journal article" date="2001" name="J. Exp. Bot.">
        <title>The AKT3 potassium channel protein interacts with the AtPP2CA protein phosphatase 2C.</title>
        <authorList>
            <person name="Vranova E."/>
            <person name="Taehtiharju S."/>
            <person name="Sriprang R."/>
            <person name="Willekens H."/>
            <person name="Heino P."/>
            <person name="Palva E.T."/>
            <person name="Inze D."/>
            <person name="Van Camp W."/>
        </authorList>
    </citation>
    <scope>INTERACTION WITH AKT2/AKT3</scope>
</reference>
<reference key="7">
    <citation type="journal article" date="2001" name="Plant J.">
        <title>Antisense inhibition of protein phosphatase 2C accelerates cold acclimation in Arabidopsis thaliana.</title>
        <authorList>
            <person name="Taehtiharju S."/>
            <person name="Palva T."/>
        </authorList>
    </citation>
    <scope>FUNCTION</scope>
    <scope>TISSUE SPECIFICITY</scope>
    <scope>INDUCTION</scope>
</reference>
<reference key="8">
    <citation type="journal article" date="2002" name="Plant Cell">
        <title>Physical and functional interaction of the Arabidopsis K(+) channel AKT2 and phosphatase AtPP2CA.</title>
        <authorList>
            <person name="Cherel I."/>
            <person name="Michard E."/>
            <person name="Platet N."/>
            <person name="Mouline K."/>
            <person name="Alcon C."/>
            <person name="Sentenac H."/>
            <person name="Thibaud J.-B."/>
        </authorList>
    </citation>
    <scope>FUNCTION</scope>
    <scope>MUTAGENESIS OF GLY-139</scope>
    <scope>TISSUE SPECIFICITY</scope>
    <scope>INDUCTION BY ABA</scope>
    <scope>INTERACTION WITH AKT2/AKT3</scope>
</reference>
<reference key="9">
    <citation type="journal article" date="2004" name="Trends Plant Sci.">
        <title>Plant PP2C phosphatases: emerging functions in stress signaling.</title>
        <authorList>
            <person name="Schweighofer A."/>
            <person name="Hirt H."/>
            <person name="Meskiene I."/>
        </authorList>
    </citation>
    <scope>GENE FAMILY</scope>
    <scope>NOMENCLATURE</scope>
</reference>
<reference key="10">
    <citation type="journal article" date="2005" name="Plant Cell">
        <title>The Arabidopsis cold-responsive transcriptome and its regulation by ICE1.</title>
        <authorList>
            <person name="Lee B.-H."/>
            <person name="Henderson D.A."/>
            <person name="Zhu J.-K."/>
        </authorList>
    </citation>
    <scope>INDUCTION BY COLD STRESS</scope>
</reference>
<reference key="11">
    <citation type="journal article" date="2006" name="Plant Physiol.">
        <title>ABA-hypersensitive germination3 encodes a protein phosphatase 2C (AtPP2CA) that strongly regulates abscisic acid signaling during germination among Arabidopsis protein phosphatase 2Cs.</title>
        <authorList>
            <person name="Yoshida T."/>
            <person name="Nishimura N."/>
            <person name="Kitahata N."/>
            <person name="Kuromori T."/>
            <person name="Ito T."/>
            <person name="Asami T."/>
            <person name="Shinozaki K."/>
            <person name="Hirayama T."/>
        </authorList>
    </citation>
    <scope>FUNCTION</scope>
    <scope>INDUCTION BY ABA</scope>
    <scope>MUTAGENESIS OF GLY-145 AND GLY-287</scope>
    <scope>TISSUE SPECIFICITY</scope>
</reference>
<reference key="12">
    <citation type="journal article" date="2006" name="Plant Physiol.">
        <title>The protein phosphatase AtPP2CA negatively regulates abscisic acid signal transduction in Arabidopsis, and effects of abh1 on AtPP2CA mRNA.</title>
        <authorList>
            <person name="Kuhn J.M."/>
            <person name="Boisson-Dernier A."/>
            <person name="Dizon M.B."/>
            <person name="Maktabi M.H."/>
            <person name="Schroeder J.I."/>
        </authorList>
    </citation>
    <scope>FUNCTION</scope>
    <scope>INDUCTION</scope>
</reference>
<reference key="13">
    <citation type="journal article" date="2007" name="Plant J.">
        <title>ABA-Hypersensitive Germination1 encodes a protein phosphatase 2C, an essential component of abscisic acid signaling in Arabidopsis seed.</title>
        <authorList>
            <person name="Nishimura N."/>
            <person name="Yoshida T."/>
            <person name="Kitahata N."/>
            <person name="Asami T."/>
            <person name="Shinozaki K."/>
            <person name="Hirayama T."/>
        </authorList>
    </citation>
    <scope>FUNCTION</scope>
    <scope>INDUCTION BY ABA</scope>
    <scope>TISSUE SPECIFICITY</scope>
</reference>
<reference key="14">
    <citation type="journal article" date="2008" name="BMC Genomics">
        <title>Genome-wide and expression analysis of protein phosphatase 2C in rice and Arabidopsis.</title>
        <authorList>
            <person name="Xue T."/>
            <person name="Wang D."/>
            <person name="Zhang S."/>
            <person name="Ehlting J."/>
            <person name="Ni F."/>
            <person name="Jacab S."/>
            <person name="Zheng C."/>
            <person name="Zhong Y."/>
        </authorList>
    </citation>
    <scope>GENE FAMILY</scope>
    <scope>NOMENCLATURE</scope>
</reference>
<reference key="15">
    <citation type="journal article" date="2008" name="Plant Physiol.">
        <title>Overexpression of AtMYB44 enhances stomatal closure to confer abiotic stress tolerance in transgenic Arabidopsis.</title>
        <authorList>
            <person name="Jung C."/>
            <person name="Seo J.S."/>
            <person name="Han S.W."/>
            <person name="Koo Y.J."/>
            <person name="Kim C.H."/>
            <person name="Song S.I."/>
            <person name="Nahm B.H."/>
            <person name="Choi Y.D."/>
            <person name="Cheong J.-J."/>
        </authorList>
    </citation>
    <scope>INDUCTION BY MYB44 AND SALT</scope>
</reference>
<reference key="16">
    <citation type="journal article" date="2009" name="Proc. Natl. Acad. Sci. U.S.A.">
        <title>A protein kinase-phosphatase pair interacts with an ion channel to regulate ABA signaling in plant guard cells.</title>
        <authorList>
            <person name="Lee S.C."/>
            <person name="Lan W."/>
            <person name="Buchanan B.B."/>
            <person name="Luan S."/>
        </authorList>
    </citation>
    <scope>FUNCTION</scope>
    <scope>INTERACTION WITH SLAC1 AND SRK2E/OST1</scope>
    <scope>MUTAGENESIS OF GLY-139 AND GLY-145</scope>
</reference>
<reference key="17">
    <citation type="journal article" date="2009" name="Science">
        <title>Abscisic acid inhibits type 2C protein phosphatases via the PYR/PYL family of START proteins.</title>
        <authorList>
            <person name="Park S.-Y."/>
            <person name="Fung P."/>
            <person name="Nishimura N."/>
            <person name="Jensen D.R."/>
            <person name="Fujii H."/>
            <person name="Zhao Y."/>
            <person name="Lumba S."/>
            <person name="Santiago J."/>
            <person name="Rodrigues A."/>
            <person name="Chow T.F."/>
            <person name="Alfred S.E."/>
            <person name="Bonetta D."/>
            <person name="Finkelstein R."/>
            <person name="Provart N.J."/>
            <person name="Desveaux D."/>
            <person name="Rodriguez P.L."/>
            <person name="McCourt P."/>
            <person name="Zhu J.-K."/>
            <person name="Schroeder J.I."/>
            <person name="Volkman B.F."/>
            <person name="Cutler S.R."/>
        </authorList>
    </citation>
    <scope>INTERACTION WITH PYR1; PYL1; PYL2; PYL3; PYL4; PYL9 AND PYL12</scope>
    <scope>ACTIVITY REGULATION</scope>
</reference>
<reference key="18">
    <citation type="journal article" date="2011" name="Mol. Plant">
        <title>Mechanistic analysis of AKT1 regulation by the CBL-CIPK-PP2CA interactions.</title>
        <authorList>
            <person name="Lan W.Z."/>
            <person name="Lee S.C."/>
            <person name="Che Y.F."/>
            <person name="Jiang Y.Q."/>
            <person name="Luan S."/>
        </authorList>
    </citation>
    <scope>INTERACTION WITH CBL1; CBL2; CBL3; CBL4; CBL5; CBL6; CBL7 AND CBL9</scope>
</reference>
<reference key="19">
    <citation type="journal article" date="2013" name="Plant Cell">
        <title>ABI1 and PP2CA phosphatases are negative regulators of Snf1-related protein kinase1 signaling in Arabidopsis.</title>
        <authorList>
            <person name="Rodrigues A."/>
            <person name="Adamo M."/>
            <person name="Crozet P."/>
            <person name="Margalha L."/>
            <person name="Confraria A."/>
            <person name="Martinho C."/>
            <person name="Elias A."/>
            <person name="Rabissi A."/>
            <person name="Lumbreras V."/>
            <person name="Gonzalez-Guzman M."/>
            <person name="Antoni R."/>
            <person name="Rodriguez P.L."/>
            <person name="Baena-Gonzalez E."/>
        </authorList>
    </citation>
    <scope>INTERACTION WITH KIN10</scope>
    <scope>FUNCTION</scope>
</reference>
<reference key="20">
    <citation type="journal article" date="2016" name="Plant Cell">
        <title>Ubiquitin ligases RGLG1 and RGLG5 regulate abscisic acid signaling by controlling the turnover of phosphatase PP2CA.</title>
        <authorList>
            <person name="Wu Q."/>
            <person name="Zhang X."/>
            <person name="Peirats-Llobet M."/>
            <person name="Belda-Palazon B."/>
            <person name="Wang X."/>
            <person name="Cui S."/>
            <person name="Yu X."/>
            <person name="Rodriguez P.L."/>
            <person name="An C."/>
        </authorList>
    </citation>
    <scope>INTERACTION WITH RGLG1 AND RGLG5</scope>
    <scope>UBIQUITINATION</scope>
</reference>
<reference key="21">
    <citation type="journal article" date="2013" name="Cell Res.">
        <title>Molecular basis for the selective and ABA-independent inhibition of PP2CA by PYL13.</title>
        <authorList>
            <person name="Li W."/>
            <person name="Wang L."/>
            <person name="Sheng X."/>
            <person name="Yan C."/>
            <person name="Zhou R."/>
            <person name="Hang J."/>
            <person name="Yin P."/>
            <person name="Yan N."/>
        </authorList>
    </citation>
    <scope>X-RAY CRYSTALLOGRAPHY (2.38 ANGSTROMS) OF 72-399 IN COMPLEX WITH MAGNESIUM AND ZINC</scope>
    <scope>INTERACTION WITH PYL13</scope>
</reference>
<dbReference type="EC" id="3.1.3.16"/>
<dbReference type="EMBL" id="D38109">
    <property type="protein sequence ID" value="BAA07287.1"/>
    <property type="molecule type" value="mRNA"/>
</dbReference>
<dbReference type="EMBL" id="AC008153">
    <property type="protein sequence ID" value="AAG51448.1"/>
    <property type="molecule type" value="Genomic_DNA"/>
</dbReference>
<dbReference type="EMBL" id="CP002686">
    <property type="protein sequence ID" value="AEE75044.1"/>
    <property type="molecule type" value="Genomic_DNA"/>
</dbReference>
<dbReference type="EMBL" id="AY074368">
    <property type="protein sequence ID" value="AAL67064.1"/>
    <property type="molecule type" value="mRNA"/>
</dbReference>
<dbReference type="EMBL" id="AY091391">
    <property type="protein sequence ID" value="AAM14330.1"/>
    <property type="molecule type" value="mRNA"/>
</dbReference>
<dbReference type="PIR" id="S55457">
    <property type="entry name" value="S55457"/>
</dbReference>
<dbReference type="RefSeq" id="NP_187748.1">
    <property type="nucleotide sequence ID" value="NM_111974.4"/>
</dbReference>
<dbReference type="PDB" id="4N0G">
    <property type="method" value="X-ray"/>
    <property type="resolution" value="2.38 A"/>
    <property type="chains" value="A/B=72-399"/>
</dbReference>
<dbReference type="PDBsum" id="4N0G"/>
<dbReference type="SMR" id="P49598"/>
<dbReference type="BioGRID" id="5648">
    <property type="interactions" value="59"/>
</dbReference>
<dbReference type="DIP" id="DIP-40197N"/>
<dbReference type="FunCoup" id="P49598">
    <property type="interactions" value="375"/>
</dbReference>
<dbReference type="IntAct" id="P49598">
    <property type="interactions" value="30"/>
</dbReference>
<dbReference type="MINT" id="P49598"/>
<dbReference type="STRING" id="3702.P49598"/>
<dbReference type="TCDB" id="8.A.211.1.1">
    <property type="family name" value="the pp2c,d phosphatase sal1 (sal1) family"/>
</dbReference>
<dbReference type="iPTMnet" id="P49598"/>
<dbReference type="PaxDb" id="3702-AT3G11410.1"/>
<dbReference type="ProteomicsDB" id="248794"/>
<dbReference type="EnsemblPlants" id="AT3G11410.1">
    <property type="protein sequence ID" value="AT3G11410.1"/>
    <property type="gene ID" value="AT3G11410"/>
</dbReference>
<dbReference type="GeneID" id="820314"/>
<dbReference type="Gramene" id="AT3G11410.1">
    <property type="protein sequence ID" value="AT3G11410.1"/>
    <property type="gene ID" value="AT3G11410"/>
</dbReference>
<dbReference type="KEGG" id="ath:AT3G11410"/>
<dbReference type="Araport" id="AT3G11410"/>
<dbReference type="TAIR" id="AT3G11410">
    <property type="gene designation" value="PP2CA"/>
</dbReference>
<dbReference type="eggNOG" id="KOG0698">
    <property type="taxonomic scope" value="Eukaryota"/>
</dbReference>
<dbReference type="HOGENOM" id="CLU_013173_20_0_1"/>
<dbReference type="InParanoid" id="P49598"/>
<dbReference type="OMA" id="FCKQSRQ"/>
<dbReference type="PhylomeDB" id="P49598"/>
<dbReference type="EvolutionaryTrace" id="P49598"/>
<dbReference type="PRO" id="PR:P49598"/>
<dbReference type="Proteomes" id="UP000006548">
    <property type="component" value="Chromosome 3"/>
</dbReference>
<dbReference type="ExpressionAtlas" id="P49598">
    <property type="expression patterns" value="baseline and differential"/>
</dbReference>
<dbReference type="GO" id="GO:0005829">
    <property type="term" value="C:cytosol"/>
    <property type="evidence" value="ECO:0000314"/>
    <property type="project" value="TAIR"/>
</dbReference>
<dbReference type="GO" id="GO:0005634">
    <property type="term" value="C:nucleus"/>
    <property type="evidence" value="ECO:0000314"/>
    <property type="project" value="TAIR"/>
</dbReference>
<dbReference type="GO" id="GO:0019900">
    <property type="term" value="F:kinase binding"/>
    <property type="evidence" value="ECO:0000353"/>
    <property type="project" value="UniProtKB"/>
</dbReference>
<dbReference type="GO" id="GO:0046872">
    <property type="term" value="F:metal ion binding"/>
    <property type="evidence" value="ECO:0007669"/>
    <property type="project" value="UniProtKB-KW"/>
</dbReference>
<dbReference type="GO" id="GO:0016791">
    <property type="term" value="F:phosphatase activity"/>
    <property type="evidence" value="ECO:0000314"/>
    <property type="project" value="UniProtKB"/>
</dbReference>
<dbReference type="GO" id="GO:0004721">
    <property type="term" value="F:phosphoprotein phosphatase activity"/>
    <property type="evidence" value="ECO:0000314"/>
    <property type="project" value="TAIR"/>
</dbReference>
<dbReference type="GO" id="GO:0019901">
    <property type="term" value="F:protein kinase binding"/>
    <property type="evidence" value="ECO:0000353"/>
    <property type="project" value="UniProtKB"/>
</dbReference>
<dbReference type="GO" id="GO:0004722">
    <property type="term" value="F:protein serine/threonine phosphatase activity"/>
    <property type="evidence" value="ECO:0000315"/>
    <property type="project" value="TAIR"/>
</dbReference>
<dbReference type="GO" id="GO:0009738">
    <property type="term" value="P:abscisic acid-activated signaling pathway"/>
    <property type="evidence" value="ECO:0000315"/>
    <property type="project" value="TAIR"/>
</dbReference>
<dbReference type="GO" id="GO:0051607">
    <property type="term" value="P:defense response to virus"/>
    <property type="evidence" value="ECO:0000315"/>
    <property type="project" value="TAIR"/>
</dbReference>
<dbReference type="GO" id="GO:0009788">
    <property type="term" value="P:negative regulation of abscisic acid-activated signaling pathway"/>
    <property type="evidence" value="ECO:0000315"/>
    <property type="project" value="TAIR"/>
</dbReference>
<dbReference type="GO" id="GO:0010360">
    <property type="term" value="P:negative regulation of anion channel activity"/>
    <property type="evidence" value="ECO:0000314"/>
    <property type="project" value="UniProtKB"/>
</dbReference>
<dbReference type="GO" id="GO:0010119">
    <property type="term" value="P:regulation of stomatal movement"/>
    <property type="evidence" value="ECO:0000315"/>
    <property type="project" value="TAIR"/>
</dbReference>
<dbReference type="GO" id="GO:0009737">
    <property type="term" value="P:response to abscisic acid"/>
    <property type="evidence" value="ECO:0000315"/>
    <property type="project" value="TAIR"/>
</dbReference>
<dbReference type="GO" id="GO:0009409">
    <property type="term" value="P:response to cold"/>
    <property type="evidence" value="ECO:0000270"/>
    <property type="project" value="TAIR"/>
</dbReference>
<dbReference type="GO" id="GO:0009414">
    <property type="term" value="P:response to water deprivation"/>
    <property type="evidence" value="ECO:0000270"/>
    <property type="project" value="TAIR"/>
</dbReference>
<dbReference type="CDD" id="cd00143">
    <property type="entry name" value="PP2Cc"/>
    <property type="match status" value="1"/>
</dbReference>
<dbReference type="FunFam" id="3.60.40.10:FF:000065">
    <property type="entry name" value="Protein phosphatase 2C 37"/>
    <property type="match status" value="1"/>
</dbReference>
<dbReference type="Gene3D" id="3.60.40.10">
    <property type="entry name" value="PPM-type phosphatase domain"/>
    <property type="match status" value="1"/>
</dbReference>
<dbReference type="InterPro" id="IPR015655">
    <property type="entry name" value="PP2C"/>
</dbReference>
<dbReference type="InterPro" id="IPR000222">
    <property type="entry name" value="PP2C_BS"/>
</dbReference>
<dbReference type="InterPro" id="IPR036457">
    <property type="entry name" value="PPM-type-like_dom_sf"/>
</dbReference>
<dbReference type="InterPro" id="IPR001932">
    <property type="entry name" value="PPM-type_phosphatase-like_dom"/>
</dbReference>
<dbReference type="PANTHER" id="PTHR47992">
    <property type="entry name" value="PROTEIN PHOSPHATASE"/>
    <property type="match status" value="1"/>
</dbReference>
<dbReference type="Pfam" id="PF00481">
    <property type="entry name" value="PP2C"/>
    <property type="match status" value="1"/>
</dbReference>
<dbReference type="SMART" id="SM00331">
    <property type="entry name" value="PP2C_SIG"/>
    <property type="match status" value="1"/>
</dbReference>
<dbReference type="SMART" id="SM00332">
    <property type="entry name" value="PP2Cc"/>
    <property type="match status" value="1"/>
</dbReference>
<dbReference type="SUPFAM" id="SSF81606">
    <property type="entry name" value="PP2C-like"/>
    <property type="match status" value="1"/>
</dbReference>
<dbReference type="PROSITE" id="PS01032">
    <property type="entry name" value="PPM_1"/>
    <property type="match status" value="1"/>
</dbReference>
<dbReference type="PROSITE" id="PS51746">
    <property type="entry name" value="PPM_2"/>
    <property type="match status" value="1"/>
</dbReference>
<accession>P49598</accession>
<gene>
    <name type="primary">PP2CA</name>
    <name type="synonym">AHG3</name>
    <name type="ordered locus">At3g11410</name>
    <name type="ORF">F24K9.8</name>
</gene>
<proteinExistence type="evidence at protein level"/>
<sequence>MAGICCGVVGETEPAAPVDSTSRASLRRRLDLLPSIKIVADSAVAPPLENCRKRQKRETVVLSTLPGNLDLDSNVRSENKKARSAVTNSNSVTEAESFFSDVPKIGTTSVCGRRRDMEDAVSIHPSFLQRNSENHHFYGVFDGHGCSHVAEKCRERLHDIVKKEVEVMASDEWTETMVKSFQKMDKEVSQRECNLVVNGATRSMKNSCRCELQSPQCDAVGSTAVVSVVTPEKIIVSNCGDSRAVLCRNGVAIPLSVDHKPDRPDELIRIQQAGGRVIYWDGARVLGVLAMSRAIGDNYLKPYVIPDPEVTVTDRTDEDECLILASDGLWDVVPNETACGVARMCLRGAGAGDDSDAAHNACSDAALLLTKLALARQSSDNVSVVVVDLRKRRNNQASS</sequence>
<name>P2C37_ARATH</name>
<feature type="chain" id="PRO_0000057769" description="Protein phosphatase 2C 37">
    <location>
        <begin position="1"/>
        <end position="399"/>
    </location>
</feature>
<feature type="domain" description="PPM-type phosphatase" evidence="2">
    <location>
        <begin position="104"/>
        <end position="389"/>
    </location>
</feature>
<feature type="binding site" evidence="1">
    <location>
        <position position="142"/>
    </location>
    <ligand>
        <name>Mn(2+)</name>
        <dbReference type="ChEBI" id="CHEBI:29035"/>
        <label>1</label>
    </ligand>
</feature>
<feature type="binding site" evidence="14 19">
    <location>
        <position position="142"/>
    </location>
    <ligand>
        <name>Mn(2+)</name>
        <dbReference type="ChEBI" id="CHEBI:29035"/>
        <label>2</label>
    </ligand>
</feature>
<feature type="binding site" evidence="1">
    <location>
        <position position="143"/>
    </location>
    <ligand>
        <name>Mn(2+)</name>
        <dbReference type="ChEBI" id="CHEBI:29035"/>
        <label>1</label>
    </ligand>
</feature>
<feature type="binding site" evidence="14 19">
    <location>
        <position position="146"/>
    </location>
    <ligand>
        <name>Zn(2+)</name>
        <dbReference type="ChEBI" id="CHEBI:29105"/>
    </ligand>
</feature>
<feature type="binding site" evidence="14 19">
    <location>
        <position position="148"/>
    </location>
    <ligand>
        <name>Zn(2+)</name>
        <dbReference type="ChEBI" id="CHEBI:29105"/>
    </ligand>
</feature>
<feature type="binding site" evidence="14 19">
    <location>
        <position position="208"/>
    </location>
    <ligand>
        <name>Zn(2+)</name>
        <dbReference type="ChEBI" id="CHEBI:29105"/>
    </ligand>
</feature>
<feature type="binding site" evidence="14 19">
    <location>
        <position position="210"/>
    </location>
    <ligand>
        <name>Zn(2+)</name>
        <dbReference type="ChEBI" id="CHEBI:29105"/>
    </ligand>
</feature>
<feature type="binding site" evidence="14 19">
    <location>
        <position position="327"/>
    </location>
    <ligand>
        <name>Mn(2+)</name>
        <dbReference type="ChEBI" id="CHEBI:29035"/>
        <label>1</label>
    </ligand>
</feature>
<feature type="binding site" evidence="14 19">
    <location>
        <position position="327"/>
    </location>
    <ligand>
        <name>Mn(2+)</name>
        <dbReference type="ChEBI" id="CHEBI:29035"/>
        <label>2</label>
    </ligand>
</feature>
<feature type="binding site" evidence="14 19">
    <location>
        <position position="331"/>
    </location>
    <ligand>
        <name>Mn(2+)</name>
        <dbReference type="ChEBI" id="CHEBI:29035"/>
        <label>1</label>
    </ligand>
</feature>
<feature type="binding site" evidence="14 19">
    <location>
        <position position="380"/>
    </location>
    <ligand>
        <name>Mn(2+)</name>
        <dbReference type="ChEBI" id="CHEBI:29035"/>
        <label>2</label>
    </ligand>
</feature>
<feature type="site" description="Lock" evidence="1">
    <location>
        <position position="280"/>
    </location>
</feature>
<feature type="mutagenesis site" description="Loss of phosphatase activity. Loss of kinase activity but intact binding and repression of SRK2E; when associated with D-145." evidence="5 12 17">
    <original>G</original>
    <variation>D</variation>
    <location>
        <position position="139"/>
    </location>
</feature>
<feature type="mutagenesis site" description="Insensitive to ABA and loss of phosphatase activity. Loss of kinase activity but intact binding and repression of SRK2E; when associated with D-139." evidence="7 12 17">
    <original>G</original>
    <variation>D</variation>
    <location>
        <position position="145"/>
    </location>
</feature>
<feature type="mutagenesis site" description="In ahg3-1; hypersensitivity to ABA during seed germination, and loss of phosphatase activity." evidence="7">
    <original>G</original>
    <variation>E</variation>
    <location>
        <position position="287"/>
    </location>
</feature>
<feature type="strand" evidence="20">
    <location>
        <begin position="105"/>
        <end position="110"/>
    </location>
</feature>
<feature type="strand" evidence="20">
    <location>
        <begin position="119"/>
        <end position="132"/>
    </location>
</feature>
<feature type="strand" evidence="20">
    <location>
        <begin position="134"/>
        <end position="147"/>
    </location>
</feature>
<feature type="helix" evidence="20">
    <location>
        <begin position="148"/>
        <end position="165"/>
    </location>
</feature>
<feature type="helix" evidence="20">
    <location>
        <begin position="173"/>
        <end position="189"/>
    </location>
</feature>
<feature type="turn" evidence="20">
    <location>
        <begin position="209"/>
        <end position="212"/>
    </location>
</feature>
<feature type="helix" evidence="20">
    <location>
        <begin position="216"/>
        <end position="219"/>
    </location>
</feature>
<feature type="strand" evidence="20">
    <location>
        <begin position="224"/>
        <end position="229"/>
    </location>
</feature>
<feature type="strand" evidence="20">
    <location>
        <begin position="231"/>
        <end position="241"/>
    </location>
</feature>
<feature type="strand" evidence="20">
    <location>
        <begin position="243"/>
        <end position="248"/>
    </location>
</feature>
<feature type="strand" evidence="20">
    <location>
        <begin position="251"/>
        <end position="256"/>
    </location>
</feature>
<feature type="helix" evidence="20">
    <location>
        <begin position="264"/>
        <end position="272"/>
    </location>
</feature>
<feature type="strand" evidence="20">
    <location>
        <begin position="277"/>
        <end position="285"/>
    </location>
</feature>
<feature type="turn" evidence="20">
    <location>
        <begin position="286"/>
        <end position="288"/>
    </location>
</feature>
<feature type="strand" evidence="20">
    <location>
        <begin position="289"/>
        <end position="293"/>
    </location>
</feature>
<feature type="helix" evidence="20">
    <location>
        <begin position="298"/>
        <end position="300"/>
    </location>
</feature>
<feature type="turn" evidence="20">
    <location>
        <begin position="301"/>
        <end position="303"/>
    </location>
</feature>
<feature type="strand" evidence="20">
    <location>
        <begin position="309"/>
        <end position="314"/>
    </location>
</feature>
<feature type="strand" evidence="20">
    <location>
        <begin position="319"/>
        <end position="325"/>
    </location>
</feature>
<feature type="helix" evidence="20">
    <location>
        <begin position="327"/>
        <end position="330"/>
    </location>
</feature>
<feature type="helix" evidence="20">
    <location>
        <begin position="335"/>
        <end position="345"/>
    </location>
</feature>
<feature type="helix" evidence="20">
    <location>
        <begin position="361"/>
        <end position="375"/>
    </location>
</feature>
<feature type="strand" evidence="20">
    <location>
        <begin position="382"/>
        <end position="388"/>
    </location>
</feature>
<comment type="function">
    <text evidence="4 5 7 8 9 12 15 17">Major negative regulator of abscisic acid (ABA) responses during seed germination and cold acclimation. Confers insensitivity to ABA. Modulates negatively the AKT2/3 activity, which mediates K(+) transport and membrane polarization during stress situations, probably by dephosphorylation. Prevents stomata closure by inactivating the S-type anion efflux channel SLAC1 and its activator SRK2E. Represses KIN10 activity by the specific dephosphorylation of its T-loop Thr-198, leading to a poststress inactivation of SnRK1 signaling (PubMed:24179127).</text>
</comment>
<comment type="catalytic activity">
    <reaction>
        <text>O-phospho-L-seryl-[protein] + H2O = L-seryl-[protein] + phosphate</text>
        <dbReference type="Rhea" id="RHEA:20629"/>
        <dbReference type="Rhea" id="RHEA-COMP:9863"/>
        <dbReference type="Rhea" id="RHEA-COMP:11604"/>
        <dbReference type="ChEBI" id="CHEBI:15377"/>
        <dbReference type="ChEBI" id="CHEBI:29999"/>
        <dbReference type="ChEBI" id="CHEBI:43474"/>
        <dbReference type="ChEBI" id="CHEBI:83421"/>
        <dbReference type="EC" id="3.1.3.16"/>
    </reaction>
</comment>
<comment type="catalytic activity">
    <reaction>
        <text>O-phospho-L-threonyl-[protein] + H2O = L-threonyl-[protein] + phosphate</text>
        <dbReference type="Rhea" id="RHEA:47004"/>
        <dbReference type="Rhea" id="RHEA-COMP:11060"/>
        <dbReference type="Rhea" id="RHEA-COMP:11605"/>
        <dbReference type="ChEBI" id="CHEBI:15377"/>
        <dbReference type="ChEBI" id="CHEBI:30013"/>
        <dbReference type="ChEBI" id="CHEBI:43474"/>
        <dbReference type="ChEBI" id="CHEBI:61977"/>
        <dbReference type="EC" id="3.1.3.16"/>
    </reaction>
</comment>
<comment type="cofactor">
    <cofactor evidence="14">
        <name>Mg(2+)</name>
        <dbReference type="ChEBI" id="CHEBI:18420"/>
    </cofactor>
    <cofactor evidence="1">
        <name>Mn(2+)</name>
        <dbReference type="ChEBI" id="CHEBI:29035"/>
    </cofactor>
    <text evidence="14">Binds 2 magnesium or manganese ions per subunit.</text>
</comment>
<comment type="activity regulation">
    <text evidence="11">Repressed by PYR/PYL/RCAR ABA receptors in an ABA-dependent manner.</text>
</comment>
<comment type="subunit">
    <text evidence="3 5 11 12 13 14 15 16">Interacts with AKT2/AKT3. Interacts with ABA-bounded PYR1, PYL1, PYL2, PYL3, PYL4, PYL9 and PYL12, and with free PYL2, PYL3, PYL4 and PYL13. Binds to and inactivates SLAC1 and SRK2E. The inactivation of SRK2E does not require phosphatase activity. Interacts with CBL1, CBL2, CBL3, CBL5, and CBL7, but not CBL4, CBL6, and CBL9 (PubMed:11181729, PubMed:12034902, PubMed:19407142, PubMed:19955427, PubMed:21596690, PubMed:24165892). Interacts with RGLG1 and RGLG5 (PubMed:27577789). Interacts with KIN10 (PubMed:24179127).</text>
</comment>
<comment type="interaction">
    <interactant intactId="EBI-1764934">
        <id>P49598</id>
    </interactant>
    <interactant intactId="EBI-1552774">
        <id>Q38898</id>
        <label>AKT2</label>
    </interactant>
    <organismsDiffer>false</organismsDiffer>
    <experiments>5</experiments>
</comment>
<comment type="interaction">
    <interactant intactId="EBI-1764934">
        <id>P49598</id>
    </interactant>
    <interactant intactId="EBI-1238139">
        <id>Q9LYL6</id>
        <label>At3g56270</label>
    </interactant>
    <organismsDiffer>false</organismsDiffer>
    <experiments>3</experiments>
</comment>
<comment type="interaction">
    <interactant intactId="EBI-1764934">
        <id>P49598</id>
    </interactant>
    <interactant intactId="EBI-25521963">
        <id>A0A178V236</id>
        <label>At4g37240</label>
    </interactant>
    <organismsDiffer>false</organismsDiffer>
    <experiments>3</experiments>
</comment>
<comment type="interaction">
    <interactant intactId="EBI-1764934">
        <id>P49598</id>
    </interactant>
    <interactant intactId="EBI-4456165">
        <id>Q9LFR7</id>
        <label>CXE17</label>
    </interactant>
    <organismsDiffer>false</organismsDiffer>
    <experiments>3</experiments>
</comment>
<comment type="interaction">
    <interactant intactId="EBI-1764934">
        <id>P49598</id>
    </interactant>
    <interactant intactId="EBI-25512274">
        <id>A0SVK0</id>
        <label>DOG1</label>
    </interactant>
    <organismsDiffer>false</organismsDiffer>
    <experiments>3</experiments>
</comment>
<comment type="interaction">
    <interactant intactId="EBI-1764934">
        <id>P49598</id>
    </interactant>
    <interactant intactId="EBI-1998836">
        <id>Q42510</id>
        <label>GN</label>
    </interactant>
    <organismsDiffer>false</organismsDiffer>
    <experiments>3</experiments>
</comment>
<comment type="interaction">
    <interactant intactId="EBI-1764934">
        <id>P49598</id>
    </interactant>
    <interactant intactId="EBI-25516330">
        <id>Q9SZZ5</id>
        <label>L73G19.50</label>
    </interactant>
    <organismsDiffer>false</organismsDiffer>
    <experiments>3</experiments>
</comment>
<comment type="interaction">
    <interactant intactId="EBI-1764934">
        <id>P49598</id>
    </interactant>
    <interactant intactId="EBI-1998046">
        <id>O22793</id>
        <label>MORF2</label>
    </interactant>
    <organismsDiffer>false</organismsDiffer>
    <experiments>3</experiments>
</comment>
<comment type="interaction">
    <interactant intactId="EBI-1764934">
        <id>P49598</id>
    </interactant>
    <interactant intactId="EBI-2363213">
        <id>Q8H1R0</id>
        <label>PYL10</label>
    </interactant>
    <organismsDiffer>false</organismsDiffer>
    <experiments>3</experiments>
</comment>
<comment type="interaction">
    <interactant intactId="EBI-1764934">
        <id>P49598</id>
    </interactant>
    <interactant intactId="EBI-2349683">
        <id>O80920</id>
        <label>PYL4</label>
    </interactant>
    <organismsDiffer>false</organismsDiffer>
    <experiments>5</experiments>
</comment>
<comment type="interaction">
    <interactant intactId="EBI-1764934">
        <id>P49598</id>
    </interactant>
    <interactant intactId="EBI-2363181">
        <id>Q9FLB1</id>
        <label>PYL5</label>
    </interactant>
    <organismsDiffer>false</organismsDiffer>
    <experiments>3</experiments>
</comment>
<comment type="interaction">
    <interactant intactId="EBI-1764934">
        <id>P49598</id>
    </interactant>
    <interactant intactId="EBI-2363192">
        <id>Q8S8E3</id>
        <label>PYL6</label>
    </interactant>
    <organismsDiffer>false</organismsDiffer>
    <experiments>3</experiments>
</comment>
<comment type="interaction">
    <interactant intactId="EBI-1764934">
        <id>P49598</id>
    </interactant>
    <interactant intactId="EBI-782514">
        <id>Q940H6</id>
        <label>SRK2E</label>
    </interactant>
    <organismsDiffer>false</organismsDiffer>
    <experiments>2</experiments>
</comment>
<comment type="interaction">
    <interactant intactId="EBI-1764934">
        <id>P49598</id>
    </interactant>
    <interactant intactId="EBI-4460083">
        <id>Q9SFT9</id>
        <label>T1B9.26</label>
    </interactant>
    <organismsDiffer>false</organismsDiffer>
    <experiments>3</experiments>
</comment>
<comment type="tissue specificity">
    <text evidence="4 5 7 9">Mostly expressed in seeds and leaves, and, to a lower extent, in roots, stems, and flowers, particularly in siliques. Essentially found in the phloem.</text>
</comment>
<comment type="induction">
    <text evidence="4 5 6 7 8 9 10">Repressed by MYB44. Induced by cold stress, drought, high salt, and ABA.</text>
</comment>
<comment type="domain">
    <text evidence="1">The 'lock' site stabilizes the complex made of PP2C, ABA and PYR/PYL/RCAR receptor by keeping receptor 'gate' and 'latch' loops in closed positions.</text>
</comment>
<comment type="PTM">
    <text evidence="16">Ubiquitinated by RGLG1 and RGLG5 in response to abscisic acid (ABA). Ubiquitination of PP2CA leads to its degradation by the proteasome.</text>
</comment>
<comment type="similarity">
    <text evidence="18">Belongs to the PP2C family.</text>
</comment>
<keyword id="KW-0002">3D-structure</keyword>
<keyword id="KW-0938">Abscisic acid signaling pathway</keyword>
<keyword id="KW-0378">Hydrolase</keyword>
<keyword id="KW-0460">Magnesium</keyword>
<keyword id="KW-0464">Manganese</keyword>
<keyword id="KW-0479">Metal-binding</keyword>
<keyword id="KW-0904">Protein phosphatase</keyword>
<keyword id="KW-1185">Reference proteome</keyword>
<keyword id="KW-0832">Ubl conjugation</keyword>
<keyword id="KW-0862">Zinc</keyword>
<evidence type="ECO:0000250" key="1"/>
<evidence type="ECO:0000255" key="2">
    <source>
        <dbReference type="PROSITE-ProRule" id="PRU01082"/>
    </source>
</evidence>
<evidence type="ECO:0000269" key="3">
    <source>
    </source>
</evidence>
<evidence type="ECO:0000269" key="4">
    <source>
    </source>
</evidence>
<evidence type="ECO:0000269" key="5">
    <source>
    </source>
</evidence>
<evidence type="ECO:0000269" key="6">
    <source>
    </source>
</evidence>
<evidence type="ECO:0000269" key="7">
    <source>
    </source>
</evidence>
<evidence type="ECO:0000269" key="8">
    <source>
    </source>
</evidence>
<evidence type="ECO:0000269" key="9">
    <source>
    </source>
</evidence>
<evidence type="ECO:0000269" key="10">
    <source>
    </source>
</evidence>
<evidence type="ECO:0000269" key="11">
    <source>
    </source>
</evidence>
<evidence type="ECO:0000269" key="12">
    <source>
    </source>
</evidence>
<evidence type="ECO:0000269" key="13">
    <source>
    </source>
</evidence>
<evidence type="ECO:0000269" key="14">
    <source>
    </source>
</evidence>
<evidence type="ECO:0000269" key="15">
    <source>
    </source>
</evidence>
<evidence type="ECO:0000269" key="16">
    <source>
    </source>
</evidence>
<evidence type="ECO:0000269" key="17">
    <source>
    </source>
</evidence>
<evidence type="ECO:0000305" key="18"/>
<evidence type="ECO:0007744" key="19">
    <source>
        <dbReference type="PDB" id="4N0G"/>
    </source>
</evidence>
<evidence type="ECO:0007829" key="20">
    <source>
        <dbReference type="PDB" id="4N0G"/>
    </source>
</evidence>
<protein>
    <recommendedName>
        <fullName>Protein phosphatase 2C 37</fullName>
        <shortName>AtPP2C37</shortName>
        <ecNumber>3.1.3.16</ecNumber>
    </recommendedName>
    <alternativeName>
        <fullName>Protein ABA-HYPERSENSITIVE GERMINATION 3</fullName>
    </alternativeName>
    <alternativeName>
        <fullName>Protein phosphatase 2C A</fullName>
        <shortName>PP2CA</shortName>
    </alternativeName>
</protein>
<organism>
    <name type="scientific">Arabidopsis thaliana</name>
    <name type="common">Mouse-ear cress</name>
    <dbReference type="NCBI Taxonomy" id="3702"/>
    <lineage>
        <taxon>Eukaryota</taxon>
        <taxon>Viridiplantae</taxon>
        <taxon>Streptophyta</taxon>
        <taxon>Embryophyta</taxon>
        <taxon>Tracheophyta</taxon>
        <taxon>Spermatophyta</taxon>
        <taxon>Magnoliopsida</taxon>
        <taxon>eudicotyledons</taxon>
        <taxon>Gunneridae</taxon>
        <taxon>Pentapetalae</taxon>
        <taxon>rosids</taxon>
        <taxon>malvids</taxon>
        <taxon>Brassicales</taxon>
        <taxon>Brassicaceae</taxon>
        <taxon>Camelineae</taxon>
        <taxon>Arabidopsis</taxon>
    </lineage>
</organism>